<evidence type="ECO:0000250" key="1"/>
<evidence type="ECO:0000255" key="2"/>
<evidence type="ECO:0000255" key="3">
    <source>
        <dbReference type="PROSITE-ProRule" id="PRU01230"/>
    </source>
</evidence>
<evidence type="ECO:0000269" key="4">
    <source>
    </source>
</evidence>
<evidence type="ECO:0000269" key="5">
    <source>
    </source>
</evidence>
<evidence type="ECO:0000269" key="6">
    <source>
    </source>
</evidence>
<evidence type="ECO:0000269" key="7">
    <source>
    </source>
</evidence>
<evidence type="ECO:0000269" key="8">
    <source>
    </source>
</evidence>
<evidence type="ECO:0000303" key="9">
    <source>
    </source>
</evidence>
<evidence type="ECO:0000303" key="10">
    <source>
    </source>
</evidence>
<evidence type="ECO:0000303" key="11">
    <source>
    </source>
</evidence>
<evidence type="ECO:0000303" key="12">
    <source>
    </source>
</evidence>
<evidence type="ECO:0000305" key="13"/>
<feature type="initiator methionine" description="Removed" evidence="1">
    <location>
        <position position="1"/>
    </location>
</feature>
<feature type="chain" id="PRO_0000203716" description="G protein alpha o subunit">
    <location>
        <begin position="2"/>
        <end position="354"/>
    </location>
</feature>
<feature type="domain" description="G-alpha" evidence="3">
    <location>
        <begin position="32"/>
        <end position="354"/>
    </location>
</feature>
<feature type="region of interest" description="G1 motif" evidence="3">
    <location>
        <begin position="35"/>
        <end position="48"/>
    </location>
</feature>
<feature type="region of interest" description="G2 motif" evidence="3">
    <location>
        <begin position="174"/>
        <end position="182"/>
    </location>
</feature>
<feature type="region of interest" description="G3 motif" evidence="3">
    <location>
        <begin position="197"/>
        <end position="206"/>
    </location>
</feature>
<feature type="region of interest" description="G4 motif" evidence="3">
    <location>
        <begin position="266"/>
        <end position="273"/>
    </location>
</feature>
<feature type="region of interest" description="G5 motif" evidence="3">
    <location>
        <begin position="324"/>
        <end position="329"/>
    </location>
</feature>
<feature type="binding site" evidence="1">
    <location>
        <begin position="40"/>
        <end position="47"/>
    </location>
    <ligand>
        <name>GTP</name>
        <dbReference type="ChEBI" id="CHEBI:37565"/>
    </ligand>
</feature>
<feature type="binding site" evidence="1">
    <location>
        <position position="47"/>
    </location>
    <ligand>
        <name>Mg(2+)</name>
        <dbReference type="ChEBI" id="CHEBI:18420"/>
    </ligand>
</feature>
<feature type="binding site" evidence="1">
    <location>
        <begin position="176"/>
        <end position="182"/>
    </location>
    <ligand>
        <name>GTP</name>
        <dbReference type="ChEBI" id="CHEBI:37565"/>
    </ligand>
</feature>
<feature type="binding site" evidence="1">
    <location>
        <position position="182"/>
    </location>
    <ligand>
        <name>Mg(2+)</name>
        <dbReference type="ChEBI" id="CHEBI:18420"/>
    </ligand>
</feature>
<feature type="binding site" evidence="1">
    <location>
        <begin position="201"/>
        <end position="205"/>
    </location>
    <ligand>
        <name>GTP</name>
        <dbReference type="ChEBI" id="CHEBI:37565"/>
    </ligand>
</feature>
<feature type="binding site" evidence="1">
    <location>
        <begin position="270"/>
        <end position="273"/>
    </location>
    <ligand>
        <name>GTP</name>
        <dbReference type="ChEBI" id="CHEBI:37565"/>
    </ligand>
</feature>
<feature type="binding site" evidence="1">
    <location>
        <position position="326"/>
    </location>
    <ligand>
        <name>GTP</name>
        <dbReference type="ChEBI" id="CHEBI:37565"/>
    </ligand>
</feature>
<feature type="lipid moiety-binding region" description="N-myristoyl glycine" evidence="2">
    <location>
        <position position="2"/>
    </location>
</feature>
<feature type="lipid moiety-binding region" description="S-palmitoyl cysteine" evidence="2">
    <location>
        <position position="3"/>
    </location>
</feature>
<feature type="splice variant" id="VSP_001830" description="In isoform B." evidence="9 10 11 12">
    <original>AQSAEERAAAARSRLIER</original>
    <variation>TTSAEERAAIQRSKQIEK</variation>
    <location>
        <begin position="4"/>
        <end position="21"/>
    </location>
</feature>
<feature type="sequence conflict" description="In Ref. 3; AAA28585." evidence="13" ref="3">
    <original>M</original>
    <variation>I</variation>
    <location>
        <position position="88"/>
    </location>
</feature>
<organism>
    <name type="scientific">Drosophila melanogaster</name>
    <name type="common">Fruit fly</name>
    <dbReference type="NCBI Taxonomy" id="7227"/>
    <lineage>
        <taxon>Eukaryota</taxon>
        <taxon>Metazoa</taxon>
        <taxon>Ecdysozoa</taxon>
        <taxon>Arthropoda</taxon>
        <taxon>Hexapoda</taxon>
        <taxon>Insecta</taxon>
        <taxon>Pterygota</taxon>
        <taxon>Neoptera</taxon>
        <taxon>Endopterygota</taxon>
        <taxon>Diptera</taxon>
        <taxon>Brachycera</taxon>
        <taxon>Muscomorpha</taxon>
        <taxon>Ephydroidea</taxon>
        <taxon>Drosophilidae</taxon>
        <taxon>Drosophila</taxon>
        <taxon>Sophophora</taxon>
    </lineage>
</organism>
<sequence>MGCAQSAEERAAAARSRLIERNLKEDGIQAAKDIKLLLLGAGESGKSTIVKQMKIIHESGFTAEDFKQYRPVVYSNTIQSLVAILRAMPTLSIQYSNNERESDAKMVFDVCQRMHDTEPFSEELLAAMKRLWQDAGVQECFSRSNEYQLNDSAKYFLDDLDRLGAKDYQPTEQDILRTRVKTTGIVEVHFSFKNLNFKLFDVGGQRSERKKWIHCFEDVTAIIFCVAMSEYDQVLHEDETTNRMQESLKLFDSICNNKWFTDTSIILFLNKKDLFEEKIRKSPLTICFPEYTGGQEYGEAAAYIQAQFEAKNKSTSKEIYCHMTCATDTNNIQFVFDAVTDVIIANNLRGCGLY</sequence>
<dbReference type="EMBL" id="M86660">
    <property type="protein sequence ID" value="AAA28577.1"/>
    <property type="molecule type" value="mRNA"/>
</dbReference>
<dbReference type="EMBL" id="M29602">
    <property type="protein sequence ID" value="AAA28587.1"/>
    <property type="molecule type" value="mRNA"/>
</dbReference>
<dbReference type="EMBL" id="M31203">
    <property type="protein sequence ID" value="AAA28586.1"/>
    <property type="molecule type" value="Genomic_DNA"/>
</dbReference>
<dbReference type="EMBL" id="M29601">
    <property type="protein sequence ID" value="AAA28586.1"/>
    <property type="status" value="JOINED"/>
    <property type="molecule type" value="Genomic_DNA"/>
</dbReference>
<dbReference type="EMBL" id="M31198">
    <property type="protein sequence ID" value="AAA28586.1"/>
    <property type="status" value="JOINED"/>
    <property type="molecule type" value="Genomic_DNA"/>
</dbReference>
<dbReference type="EMBL" id="M31199">
    <property type="protein sequence ID" value="AAA28586.1"/>
    <property type="status" value="JOINED"/>
    <property type="molecule type" value="Genomic_DNA"/>
</dbReference>
<dbReference type="EMBL" id="M31200">
    <property type="protein sequence ID" value="AAA28586.1"/>
    <property type="status" value="JOINED"/>
    <property type="molecule type" value="Genomic_DNA"/>
</dbReference>
<dbReference type="EMBL" id="M31201">
    <property type="protein sequence ID" value="AAA28586.1"/>
    <property type="status" value="JOINED"/>
    <property type="molecule type" value="Genomic_DNA"/>
</dbReference>
<dbReference type="EMBL" id="M31202">
    <property type="protein sequence ID" value="AAA28586.1"/>
    <property type="status" value="JOINED"/>
    <property type="molecule type" value="Genomic_DNA"/>
</dbReference>
<dbReference type="EMBL" id="M30151">
    <property type="protein sequence ID" value="AAA28584.1"/>
    <property type="molecule type" value="mRNA"/>
</dbReference>
<dbReference type="EMBL" id="M30152">
    <property type="protein sequence ID" value="AAA28585.1"/>
    <property type="molecule type" value="mRNA"/>
</dbReference>
<dbReference type="EMBL" id="M31129">
    <property type="protein sequence ID" value="AAA28583.1"/>
    <property type="molecule type" value="Genomic_DNA"/>
</dbReference>
<dbReference type="EMBL" id="M29731">
    <property type="protein sequence ID" value="AAA28580.1"/>
    <property type="molecule type" value="mRNA"/>
</dbReference>
<dbReference type="EMBL" id="M29732">
    <property type="protein sequence ID" value="AAA28581.1"/>
    <property type="molecule type" value="mRNA"/>
</dbReference>
<dbReference type="EMBL" id="AE013599">
    <property type="protein sequence ID" value="AAF58789.1"/>
    <property type="molecule type" value="Genomic_DNA"/>
</dbReference>
<dbReference type="EMBL" id="AE013599">
    <property type="protein sequence ID" value="AAF58790.1"/>
    <property type="molecule type" value="Genomic_DNA"/>
</dbReference>
<dbReference type="EMBL" id="AE013599">
    <property type="protein sequence ID" value="AAO41420.1"/>
    <property type="molecule type" value="Genomic_DNA"/>
</dbReference>
<dbReference type="EMBL" id="AE013599">
    <property type="protein sequence ID" value="AAO41421.1"/>
    <property type="molecule type" value="Genomic_DNA"/>
</dbReference>
<dbReference type="EMBL" id="AE013599">
    <property type="protein sequence ID" value="AAO41422.1"/>
    <property type="molecule type" value="Genomic_DNA"/>
</dbReference>
<dbReference type="EMBL" id="AE013599">
    <property type="protein sequence ID" value="AAO41423.1"/>
    <property type="molecule type" value="Genomic_DNA"/>
</dbReference>
<dbReference type="EMBL" id="AE013599">
    <property type="protein sequence ID" value="AAS64872.1"/>
    <property type="molecule type" value="Genomic_DNA"/>
</dbReference>
<dbReference type="EMBL" id="AE013599">
    <property type="protein sequence ID" value="AAS64873.1"/>
    <property type="molecule type" value="Genomic_DNA"/>
</dbReference>
<dbReference type="EMBL" id="AY121631">
    <property type="protein sequence ID" value="AAM51958.1"/>
    <property type="molecule type" value="mRNA"/>
</dbReference>
<dbReference type="EMBL" id="BT001768">
    <property type="protein sequence ID" value="AAN71523.1"/>
    <property type="status" value="ALT_SEQ"/>
    <property type="molecule type" value="mRNA"/>
</dbReference>
<dbReference type="EMBL" id="BT046134">
    <property type="protein sequence ID" value="ACK77603.1"/>
    <property type="molecule type" value="mRNA"/>
</dbReference>
<dbReference type="PIR" id="A34304">
    <property type="entry name" value="RGFFO1"/>
</dbReference>
<dbReference type="PIR" id="B34304">
    <property type="entry name" value="RGFFO2"/>
</dbReference>
<dbReference type="RefSeq" id="NP_523684.2">
    <molecule id="P16378-1"/>
    <property type="nucleotide sequence ID" value="NM_078960.5"/>
</dbReference>
<dbReference type="RefSeq" id="NP_724934.1">
    <molecule id="P16378-2"/>
    <property type="nucleotide sequence ID" value="NM_165772.4"/>
</dbReference>
<dbReference type="RefSeq" id="NP_724935.1">
    <molecule id="P16378-1"/>
    <property type="nucleotide sequence ID" value="NM_165773.3"/>
</dbReference>
<dbReference type="RefSeq" id="NP_788304.1">
    <molecule id="P16378-2"/>
    <property type="nucleotide sequence ID" value="NM_176124.3"/>
</dbReference>
<dbReference type="RefSeq" id="NP_788305.1">
    <molecule id="P16378-2"/>
    <property type="nucleotide sequence ID" value="NM_176125.3"/>
</dbReference>
<dbReference type="RefSeq" id="NP_788306.1">
    <molecule id="P16378-2"/>
    <property type="nucleotide sequence ID" value="NM_176126.3"/>
</dbReference>
<dbReference type="RefSeq" id="NP_788307.1">
    <molecule id="P16378-2"/>
    <property type="nucleotide sequence ID" value="NM_176127.3"/>
</dbReference>
<dbReference type="RefSeq" id="NP_995801.1">
    <molecule id="P16378-1"/>
    <property type="nucleotide sequence ID" value="NM_206079.2"/>
</dbReference>
<dbReference type="RefSeq" id="NP_995802.1">
    <molecule id="P16378-2"/>
    <property type="nucleotide sequence ID" value="NM_206080.2"/>
</dbReference>
<dbReference type="SMR" id="P16378"/>
<dbReference type="BioGRID" id="61922">
    <property type="interactions" value="29"/>
</dbReference>
<dbReference type="DIP" id="DIP-17224N"/>
<dbReference type="FunCoup" id="P16378">
    <property type="interactions" value="490"/>
</dbReference>
<dbReference type="IntAct" id="P16378">
    <property type="interactions" value="9"/>
</dbReference>
<dbReference type="STRING" id="7227.FBpp0089316"/>
<dbReference type="PaxDb" id="7227-FBpp0087359"/>
<dbReference type="DNASU" id="36104"/>
<dbReference type="EnsemblMetazoa" id="FBtr0088264">
    <molecule id="P16378-2"/>
    <property type="protein sequence ID" value="FBpp0087359"/>
    <property type="gene ID" value="FBgn0001122"/>
</dbReference>
<dbReference type="EnsemblMetazoa" id="FBtr0088265">
    <molecule id="P16378-1"/>
    <property type="protein sequence ID" value="FBpp0087360"/>
    <property type="gene ID" value="FBgn0001122"/>
</dbReference>
<dbReference type="EnsemblMetazoa" id="FBtr0088266">
    <molecule id="P16378-1"/>
    <property type="protein sequence ID" value="FBpp0087361"/>
    <property type="gene ID" value="FBgn0001122"/>
</dbReference>
<dbReference type="EnsemblMetazoa" id="FBtr0088267">
    <molecule id="P16378-2"/>
    <property type="protein sequence ID" value="FBpp0087362"/>
    <property type="gene ID" value="FBgn0001122"/>
</dbReference>
<dbReference type="EnsemblMetazoa" id="FBtr0088268">
    <molecule id="P16378-2"/>
    <property type="protein sequence ID" value="FBpp0087363"/>
    <property type="gene ID" value="FBgn0001122"/>
</dbReference>
<dbReference type="EnsemblMetazoa" id="FBtr0088269">
    <molecule id="P16378-2"/>
    <property type="protein sequence ID" value="FBpp0087364"/>
    <property type="gene ID" value="FBgn0001122"/>
</dbReference>
<dbReference type="EnsemblMetazoa" id="FBtr0088270">
    <molecule id="P16378-2"/>
    <property type="protein sequence ID" value="FBpp0087365"/>
    <property type="gene ID" value="FBgn0001122"/>
</dbReference>
<dbReference type="EnsemblMetazoa" id="FBtr0088271">
    <molecule id="P16378-2"/>
    <property type="protein sequence ID" value="FBpp0089315"/>
    <property type="gene ID" value="FBgn0001122"/>
</dbReference>
<dbReference type="EnsemblMetazoa" id="FBtr0088272">
    <molecule id="P16378-1"/>
    <property type="protein sequence ID" value="FBpp0089316"/>
    <property type="gene ID" value="FBgn0001122"/>
</dbReference>
<dbReference type="GeneID" id="36104"/>
<dbReference type="KEGG" id="dme:Dmel_CG2204"/>
<dbReference type="AGR" id="FB:FBgn0001122"/>
<dbReference type="CTD" id="36104"/>
<dbReference type="FlyBase" id="FBgn0001122">
    <property type="gene designation" value="Galphao"/>
</dbReference>
<dbReference type="VEuPathDB" id="VectorBase:FBgn0001122"/>
<dbReference type="eggNOG" id="KOG0082">
    <property type="taxonomic scope" value="Eukaryota"/>
</dbReference>
<dbReference type="GeneTree" id="ENSGT00940000155883"/>
<dbReference type="HOGENOM" id="CLU_014184_6_0_1"/>
<dbReference type="InParanoid" id="P16378"/>
<dbReference type="OMA" id="GKKDYMP"/>
<dbReference type="OrthoDB" id="5817230at2759"/>
<dbReference type="PhylomeDB" id="P16378"/>
<dbReference type="Reactome" id="R-DME-4086398">
    <property type="pathway name" value="Ca2+ pathway"/>
</dbReference>
<dbReference type="SignaLink" id="P16378"/>
<dbReference type="BioGRID-ORCS" id="36104">
    <property type="hits" value="0 hits in 3 CRISPR screens"/>
</dbReference>
<dbReference type="ChiTaRS" id="Galphao">
    <property type="organism name" value="fly"/>
</dbReference>
<dbReference type="GenomeRNAi" id="36104"/>
<dbReference type="PRO" id="PR:P16378"/>
<dbReference type="Proteomes" id="UP000000803">
    <property type="component" value="Chromosome 2R"/>
</dbReference>
<dbReference type="Bgee" id="FBgn0001122">
    <property type="expression patterns" value="Expressed in columnar neuron T1 (Drosophila) in insect head and 297 other cell types or tissues"/>
</dbReference>
<dbReference type="ExpressionAtlas" id="P16378">
    <property type="expression patterns" value="baseline and differential"/>
</dbReference>
<dbReference type="GO" id="GO:0005737">
    <property type="term" value="C:cytoplasm"/>
    <property type="evidence" value="ECO:0000318"/>
    <property type="project" value="GO_Central"/>
</dbReference>
<dbReference type="GO" id="GO:0005834">
    <property type="term" value="C:heterotrimeric G-protein complex"/>
    <property type="evidence" value="ECO:0000314"/>
    <property type="project" value="FlyBase"/>
</dbReference>
<dbReference type="GO" id="GO:0005886">
    <property type="term" value="C:plasma membrane"/>
    <property type="evidence" value="ECO:0007005"/>
    <property type="project" value="FlyBase"/>
</dbReference>
<dbReference type="GO" id="GO:0001664">
    <property type="term" value="F:G protein-coupled receptor binding"/>
    <property type="evidence" value="ECO:0000318"/>
    <property type="project" value="GO_Central"/>
</dbReference>
<dbReference type="GO" id="GO:0031683">
    <property type="term" value="F:G-protein beta/gamma-subunit complex binding"/>
    <property type="evidence" value="ECO:0000318"/>
    <property type="project" value="GO_Central"/>
</dbReference>
<dbReference type="GO" id="GO:0005525">
    <property type="term" value="F:GTP binding"/>
    <property type="evidence" value="ECO:0000314"/>
    <property type="project" value="FlyBase"/>
</dbReference>
<dbReference type="GO" id="GO:0003924">
    <property type="term" value="F:GTPase activity"/>
    <property type="evidence" value="ECO:0000318"/>
    <property type="project" value="GO_Central"/>
</dbReference>
<dbReference type="GO" id="GO:0046872">
    <property type="term" value="F:metal ion binding"/>
    <property type="evidence" value="ECO:0007669"/>
    <property type="project" value="UniProtKB-KW"/>
</dbReference>
<dbReference type="GO" id="GO:0007188">
    <property type="term" value="P:adenylate cyclase-modulating G protein-coupled receptor signaling pathway"/>
    <property type="evidence" value="ECO:0000318"/>
    <property type="project" value="GO_Central"/>
</dbReference>
<dbReference type="GO" id="GO:0008356">
    <property type="term" value="P:asymmetric cell division"/>
    <property type="evidence" value="ECO:0000315"/>
    <property type="project" value="FlyBase"/>
</dbReference>
<dbReference type="GO" id="GO:0032291">
    <property type="term" value="P:axon ensheathment in central nervous system"/>
    <property type="evidence" value="ECO:0000315"/>
    <property type="project" value="UniProtKB"/>
</dbReference>
<dbReference type="GO" id="GO:0042595">
    <property type="term" value="P:behavioral response to starvation"/>
    <property type="evidence" value="ECO:0000315"/>
    <property type="project" value="FlyBase"/>
</dbReference>
<dbReference type="GO" id="GO:0019722">
    <property type="term" value="P:calcium-mediated signaling"/>
    <property type="evidence" value="ECO:0000315"/>
    <property type="project" value="FlyBase"/>
</dbReference>
<dbReference type="GO" id="GO:0061343">
    <property type="term" value="P:cell adhesion involved in heart morphogenesis"/>
    <property type="evidence" value="ECO:0000315"/>
    <property type="project" value="FlyBase"/>
</dbReference>
<dbReference type="GO" id="GO:0030866">
    <property type="term" value="P:cortical actin cytoskeleton organization"/>
    <property type="evidence" value="ECO:0000315"/>
    <property type="project" value="UniProtKB"/>
</dbReference>
<dbReference type="GO" id="GO:0060857">
    <property type="term" value="P:establishment of glial blood-brain barrier"/>
    <property type="evidence" value="ECO:0000315"/>
    <property type="project" value="FlyBase"/>
</dbReference>
<dbReference type="GO" id="GO:0001737">
    <property type="term" value="P:establishment of imaginal disc-derived wing hair orientation"/>
    <property type="evidence" value="ECO:0000315"/>
    <property type="project" value="FlyBase"/>
</dbReference>
<dbReference type="GO" id="GO:0007186">
    <property type="term" value="P:G protein-coupled receptor signaling pathway"/>
    <property type="evidence" value="ECO:0000315"/>
    <property type="project" value="UniProtKB"/>
</dbReference>
<dbReference type="GO" id="GO:0007507">
    <property type="term" value="P:heart development"/>
    <property type="evidence" value="ECO:0000304"/>
    <property type="project" value="FlyBase"/>
</dbReference>
<dbReference type="GO" id="GO:0045886">
    <property type="term" value="P:negative regulation of synaptic assembly at neuromuscular junction"/>
    <property type="evidence" value="ECO:0000315"/>
    <property type="project" value="FlyBase"/>
</dbReference>
<dbReference type="GO" id="GO:0035567">
    <property type="term" value="P:non-canonical Wnt signaling pathway"/>
    <property type="evidence" value="ECO:0000315"/>
    <property type="project" value="FlyBase"/>
</dbReference>
<dbReference type="GO" id="GO:0050916">
    <property type="term" value="P:sensory perception of sweet taste"/>
    <property type="evidence" value="ECO:0000315"/>
    <property type="project" value="FlyBase"/>
</dbReference>
<dbReference type="GO" id="GO:0019991">
    <property type="term" value="P:septate junction assembly"/>
    <property type="evidence" value="ECO:0000315"/>
    <property type="project" value="FlyBase"/>
</dbReference>
<dbReference type="GO" id="GO:0007419">
    <property type="term" value="P:ventral cord development"/>
    <property type="evidence" value="ECO:0000315"/>
    <property type="project" value="FlyBase"/>
</dbReference>
<dbReference type="CDD" id="cd00066">
    <property type="entry name" value="G-alpha"/>
    <property type="match status" value="1"/>
</dbReference>
<dbReference type="FunFam" id="1.10.400.10:FF:000001">
    <property type="entry name" value="Guanine nucleotide-binding protein G(I) subunit alpha"/>
    <property type="match status" value="1"/>
</dbReference>
<dbReference type="FunFam" id="3.40.50.300:FF:003559">
    <property type="entry name" value="Guanine nucleotide-binding protein G(i) subunit alpha-1"/>
    <property type="match status" value="1"/>
</dbReference>
<dbReference type="FunFam" id="3.40.50.300:FF:002307">
    <property type="entry name" value="Guanine nucleotide-binding protein G(k) subunit alpha"/>
    <property type="match status" value="1"/>
</dbReference>
<dbReference type="Gene3D" id="1.10.400.10">
    <property type="entry name" value="GI Alpha 1, domain 2-like"/>
    <property type="match status" value="1"/>
</dbReference>
<dbReference type="Gene3D" id="3.40.50.300">
    <property type="entry name" value="P-loop containing nucleotide triphosphate hydrolases"/>
    <property type="match status" value="1"/>
</dbReference>
<dbReference type="InterPro" id="IPR001408">
    <property type="entry name" value="Gprotein_alpha_I"/>
</dbReference>
<dbReference type="InterPro" id="IPR001019">
    <property type="entry name" value="Gprotein_alpha_su"/>
</dbReference>
<dbReference type="InterPro" id="IPR011025">
    <property type="entry name" value="GproteinA_insert"/>
</dbReference>
<dbReference type="InterPro" id="IPR027417">
    <property type="entry name" value="P-loop_NTPase"/>
</dbReference>
<dbReference type="PANTHER" id="PTHR10218:SF362">
    <property type="entry name" value="G PROTEIN ALPHA O SUBUNIT"/>
    <property type="match status" value="1"/>
</dbReference>
<dbReference type="PANTHER" id="PTHR10218">
    <property type="entry name" value="GTP-BINDING PROTEIN ALPHA SUBUNIT"/>
    <property type="match status" value="1"/>
</dbReference>
<dbReference type="Pfam" id="PF00503">
    <property type="entry name" value="G-alpha"/>
    <property type="match status" value="1"/>
</dbReference>
<dbReference type="PRINTS" id="PR00318">
    <property type="entry name" value="GPROTEINA"/>
</dbReference>
<dbReference type="PRINTS" id="PR00441">
    <property type="entry name" value="GPROTEINAI"/>
</dbReference>
<dbReference type="SMART" id="SM00275">
    <property type="entry name" value="G_alpha"/>
    <property type="match status" value="1"/>
</dbReference>
<dbReference type="SUPFAM" id="SSF52540">
    <property type="entry name" value="P-loop containing nucleoside triphosphate hydrolases"/>
    <property type="match status" value="1"/>
</dbReference>
<dbReference type="SUPFAM" id="SSF47895">
    <property type="entry name" value="Transducin (alpha subunit), insertion domain"/>
    <property type="match status" value="1"/>
</dbReference>
<dbReference type="PROSITE" id="PS51882">
    <property type="entry name" value="G_ALPHA"/>
    <property type="match status" value="1"/>
</dbReference>
<keyword id="KW-0025">Alternative splicing</keyword>
<keyword id="KW-0342">GTP-binding</keyword>
<keyword id="KW-0449">Lipoprotein</keyword>
<keyword id="KW-0460">Magnesium</keyword>
<keyword id="KW-0479">Metal-binding</keyword>
<keyword id="KW-0519">Myristate</keyword>
<keyword id="KW-0547">Nucleotide-binding</keyword>
<keyword id="KW-0564">Palmitate</keyword>
<keyword id="KW-1185">Reference proteome</keyword>
<keyword id="KW-0807">Transducer</keyword>
<name>GNAO_DROME</name>
<protein>
    <recommendedName>
        <fullName>G protein alpha o subunit</fullName>
    </recommendedName>
    <alternativeName>
        <fullName>Guanine nucleotide-binding protein G(o) subunit alpha 47A</fullName>
    </alternativeName>
</protein>
<accession>P16378</accession>
<accession>A4UZB6</accession>
<accession>A4UZC1</accession>
<accession>B7FF70</accession>
<accession>P16377</accession>
<accession>P16707</accession>
<accession>Q540V8</accession>
<accession>Q8IGI5</accession>
<accession>Q9V5L5</accession>
<accession>Q9V5L6</accession>
<proteinExistence type="evidence at protein level"/>
<gene>
    <name type="primary">Galphao</name>
    <name type="synonym">G-oa47A</name>
    <name type="synonym">G-oalpha47A</name>
    <name type="ORF">CG2204</name>
</gene>
<comment type="function">
    <text evidence="4">Guanine nucleotide-binding proteins (G proteins) are involved as modulators or transducers in various transmembrane signaling systems. Plays a role in glial cell differentiation during embryogenesis; loco, Galphai and the G-protein coupled receptor, moody, are required in the surface glia to achieve effective insulation of the nerve cord.</text>
</comment>
<comment type="subunit">
    <text>G proteins are composed of 3 units; alpha, beta and gamma. The alpha chain contains the guanine nucleotide binding site.</text>
</comment>
<comment type="interaction">
    <interactant intactId="EBI-197464">
        <id>P16378</id>
    </interactant>
    <interactant intactId="EBI-116643">
        <id>Q9VB22</id>
        <label>pins</label>
    </interactant>
    <organismsDiffer>false</organismsDiffer>
    <experiments>3</experiments>
</comment>
<comment type="alternative products">
    <event type="alternative splicing"/>
    <isoform>
        <id>P16378-1</id>
        <name>A</name>
        <name>I</name>
        <sequence type="displayed"/>
    </isoform>
    <isoform>
        <id>P16378-2</id>
        <name>B</name>
        <name>D</name>
        <name>E</name>
        <name>F</name>
        <name>G</name>
        <name>H</name>
        <sequence type="described" ref="VSP_001830"/>
    </isoform>
</comment>
<comment type="tissue specificity">
    <text evidence="5 6 7 8">Expressed primarily in neuronal cell bodies in the brain, optic lobe, and thoracic and abdominal ganglia. Also expressed in antenna, oocytes and ovarian nurse cells.</text>
</comment>
<comment type="developmental stage">
    <text evidence="4 6">Expressed in the surface glial cells of the nerve cords at the larval stage (at protein level). Expressed throughout development.</text>
</comment>
<comment type="similarity">
    <text evidence="13">Belongs to the G-alpha family. G(i/o/t/z) subfamily.</text>
</comment>
<comment type="sequence caution" evidence="13">
    <conflict type="erroneous termination">
        <sequence resource="EMBL-CDS" id="AAN71523"/>
    </conflict>
    <text>Truncated C-terminus.</text>
</comment>
<reference key="1">
    <citation type="journal article" date="1989" name="Cell Regul.">
        <title>Neuronal expression of a newly identified Drosophila melanogaster G protein alpha 0 subunit.</title>
        <authorList>
            <person name="Schmidt C.J."/>
            <person name="Garen-Fazio S."/>
            <person name="Chow Y.K."/>
            <person name="Neer E.J."/>
        </authorList>
    </citation>
    <scope>NUCLEOTIDE SEQUENCE [MRNA] (ISOFORM B)</scope>
    <scope>TISSUE SPECIFICITY</scope>
</reference>
<reference key="2">
    <citation type="journal article" date="1989" name="J. Biol. Chem.">
        <title>Molecular characterization of Drosophila gene encoding G0 alpha subunit homolog.</title>
        <authorList>
            <person name="Yoon J."/>
            <person name="Shortridge R.D."/>
            <person name="Bloomquist B.T."/>
            <person name="Schneuwly S."/>
            <person name="Perdew M.H."/>
            <person name="Pak W.L."/>
        </authorList>
    </citation>
    <scope>NUCLEOTIDE SEQUENCE [GENOMIC DNA / MRNA] (ISOFORMS A AND B)</scope>
    <scope>ALTERNATIVE SPLICING</scope>
    <scope>TISSUE SPECIFICITY</scope>
    <source>
        <tissue>Head</tissue>
    </source>
</reference>
<reference key="3">
    <citation type="journal article" date="1989" name="J. Biol. Chem.">
        <title>The Drosophila Go alpha-like G protein gene produces multiple transcripts and is expressed in the nervous system and in ovaries.</title>
        <authorList>
            <person name="de Sousa S.M."/>
            <person name="Hoveland L.L."/>
            <person name="Yarfitz S."/>
            <person name="Hurley J.B."/>
        </authorList>
    </citation>
    <scope>NUCLEOTIDE SEQUENCE [MRNA] (ISOFORMS A AND B)</scope>
    <scope>NUCLEOTIDE SEQUENCE [GENOMIC DNA] OF 156-354</scope>
    <scope>TISSUE SPECIFICITY</scope>
    <scope>DEVELOPMENTAL STAGE</scope>
    <source>
        <strain>Canton-S</strain>
        <tissue>Embryo</tissue>
        <tissue>Head</tissue>
    </source>
</reference>
<reference key="4">
    <citation type="journal article" date="1989" name="J. Biol. Chem.">
        <title>Immunological and molecular characterization of Go alpha-like proteins in the Drosophila central nervous system.</title>
        <authorList>
            <person name="Thambi N.C."/>
            <person name="Quan F."/>
            <person name="Wolfgang W.J."/>
            <person name="Spiegel A."/>
            <person name="Forte M.A."/>
        </authorList>
    </citation>
    <scope>NUCLEOTIDE SEQUENCE [MRNA] (ISOFORMS A AND B)</scope>
    <scope>TISSUE SPECIFICITY</scope>
</reference>
<reference key="5">
    <citation type="journal article" date="2000" name="Science">
        <title>The genome sequence of Drosophila melanogaster.</title>
        <authorList>
            <person name="Adams M.D."/>
            <person name="Celniker S.E."/>
            <person name="Holt R.A."/>
            <person name="Evans C.A."/>
            <person name="Gocayne J.D."/>
            <person name="Amanatides P.G."/>
            <person name="Scherer S.E."/>
            <person name="Li P.W."/>
            <person name="Hoskins R.A."/>
            <person name="Galle R.F."/>
            <person name="George R.A."/>
            <person name="Lewis S.E."/>
            <person name="Richards S."/>
            <person name="Ashburner M."/>
            <person name="Henderson S.N."/>
            <person name="Sutton G.G."/>
            <person name="Wortman J.R."/>
            <person name="Yandell M.D."/>
            <person name="Zhang Q."/>
            <person name="Chen L.X."/>
            <person name="Brandon R.C."/>
            <person name="Rogers Y.-H.C."/>
            <person name="Blazej R.G."/>
            <person name="Champe M."/>
            <person name="Pfeiffer B.D."/>
            <person name="Wan K.H."/>
            <person name="Doyle C."/>
            <person name="Baxter E.G."/>
            <person name="Helt G."/>
            <person name="Nelson C.R."/>
            <person name="Miklos G.L.G."/>
            <person name="Abril J.F."/>
            <person name="Agbayani A."/>
            <person name="An H.-J."/>
            <person name="Andrews-Pfannkoch C."/>
            <person name="Baldwin D."/>
            <person name="Ballew R.M."/>
            <person name="Basu A."/>
            <person name="Baxendale J."/>
            <person name="Bayraktaroglu L."/>
            <person name="Beasley E.M."/>
            <person name="Beeson K.Y."/>
            <person name="Benos P.V."/>
            <person name="Berman B.P."/>
            <person name="Bhandari D."/>
            <person name="Bolshakov S."/>
            <person name="Borkova D."/>
            <person name="Botchan M.R."/>
            <person name="Bouck J."/>
            <person name="Brokstein P."/>
            <person name="Brottier P."/>
            <person name="Burtis K.C."/>
            <person name="Busam D.A."/>
            <person name="Butler H."/>
            <person name="Cadieu E."/>
            <person name="Center A."/>
            <person name="Chandra I."/>
            <person name="Cherry J.M."/>
            <person name="Cawley S."/>
            <person name="Dahlke C."/>
            <person name="Davenport L.B."/>
            <person name="Davies P."/>
            <person name="de Pablos B."/>
            <person name="Delcher A."/>
            <person name="Deng Z."/>
            <person name="Mays A.D."/>
            <person name="Dew I."/>
            <person name="Dietz S.M."/>
            <person name="Dodson K."/>
            <person name="Doup L.E."/>
            <person name="Downes M."/>
            <person name="Dugan-Rocha S."/>
            <person name="Dunkov B.C."/>
            <person name="Dunn P."/>
            <person name="Durbin K.J."/>
            <person name="Evangelista C.C."/>
            <person name="Ferraz C."/>
            <person name="Ferriera S."/>
            <person name="Fleischmann W."/>
            <person name="Fosler C."/>
            <person name="Gabrielian A.E."/>
            <person name="Garg N.S."/>
            <person name="Gelbart W.M."/>
            <person name="Glasser K."/>
            <person name="Glodek A."/>
            <person name="Gong F."/>
            <person name="Gorrell J.H."/>
            <person name="Gu Z."/>
            <person name="Guan P."/>
            <person name="Harris M."/>
            <person name="Harris N.L."/>
            <person name="Harvey D.A."/>
            <person name="Heiman T.J."/>
            <person name="Hernandez J.R."/>
            <person name="Houck J."/>
            <person name="Hostin D."/>
            <person name="Houston K.A."/>
            <person name="Howland T.J."/>
            <person name="Wei M.-H."/>
            <person name="Ibegwam C."/>
            <person name="Jalali M."/>
            <person name="Kalush F."/>
            <person name="Karpen G.H."/>
            <person name="Ke Z."/>
            <person name="Kennison J.A."/>
            <person name="Ketchum K.A."/>
            <person name="Kimmel B.E."/>
            <person name="Kodira C.D."/>
            <person name="Kraft C.L."/>
            <person name="Kravitz S."/>
            <person name="Kulp D."/>
            <person name="Lai Z."/>
            <person name="Lasko P."/>
            <person name="Lei Y."/>
            <person name="Levitsky A.A."/>
            <person name="Li J.H."/>
            <person name="Li Z."/>
            <person name="Liang Y."/>
            <person name="Lin X."/>
            <person name="Liu X."/>
            <person name="Mattei B."/>
            <person name="McIntosh T.C."/>
            <person name="McLeod M.P."/>
            <person name="McPherson D."/>
            <person name="Merkulov G."/>
            <person name="Milshina N.V."/>
            <person name="Mobarry C."/>
            <person name="Morris J."/>
            <person name="Moshrefi A."/>
            <person name="Mount S.M."/>
            <person name="Moy M."/>
            <person name="Murphy B."/>
            <person name="Murphy L."/>
            <person name="Muzny D.M."/>
            <person name="Nelson D.L."/>
            <person name="Nelson D.R."/>
            <person name="Nelson K.A."/>
            <person name="Nixon K."/>
            <person name="Nusskern D.R."/>
            <person name="Pacleb J.M."/>
            <person name="Palazzolo M."/>
            <person name="Pittman G.S."/>
            <person name="Pan S."/>
            <person name="Pollard J."/>
            <person name="Puri V."/>
            <person name="Reese M.G."/>
            <person name="Reinert K."/>
            <person name="Remington K."/>
            <person name="Saunders R.D.C."/>
            <person name="Scheeler F."/>
            <person name="Shen H."/>
            <person name="Shue B.C."/>
            <person name="Siden-Kiamos I."/>
            <person name="Simpson M."/>
            <person name="Skupski M.P."/>
            <person name="Smith T.J."/>
            <person name="Spier E."/>
            <person name="Spradling A.C."/>
            <person name="Stapleton M."/>
            <person name="Strong R."/>
            <person name="Sun E."/>
            <person name="Svirskas R."/>
            <person name="Tector C."/>
            <person name="Turner R."/>
            <person name="Venter E."/>
            <person name="Wang A.H."/>
            <person name="Wang X."/>
            <person name="Wang Z.-Y."/>
            <person name="Wassarman D.A."/>
            <person name="Weinstock G.M."/>
            <person name="Weissenbach J."/>
            <person name="Williams S.M."/>
            <person name="Woodage T."/>
            <person name="Worley K.C."/>
            <person name="Wu D."/>
            <person name="Yang S."/>
            <person name="Yao Q.A."/>
            <person name="Ye J."/>
            <person name="Yeh R.-F."/>
            <person name="Zaveri J.S."/>
            <person name="Zhan M."/>
            <person name="Zhang G."/>
            <person name="Zhao Q."/>
            <person name="Zheng L."/>
            <person name="Zheng X.H."/>
            <person name="Zhong F.N."/>
            <person name="Zhong W."/>
            <person name="Zhou X."/>
            <person name="Zhu S.C."/>
            <person name="Zhu X."/>
            <person name="Smith H.O."/>
            <person name="Gibbs R.A."/>
            <person name="Myers E.W."/>
            <person name="Rubin G.M."/>
            <person name="Venter J.C."/>
        </authorList>
    </citation>
    <scope>NUCLEOTIDE SEQUENCE [LARGE SCALE GENOMIC DNA]</scope>
    <source>
        <strain>Berkeley</strain>
    </source>
</reference>
<reference key="6">
    <citation type="journal article" date="2002" name="Genome Biol.">
        <title>Annotation of the Drosophila melanogaster euchromatic genome: a systematic review.</title>
        <authorList>
            <person name="Misra S."/>
            <person name="Crosby M.A."/>
            <person name="Mungall C.J."/>
            <person name="Matthews B.B."/>
            <person name="Campbell K.S."/>
            <person name="Hradecky P."/>
            <person name="Huang Y."/>
            <person name="Kaminker J.S."/>
            <person name="Millburn G.H."/>
            <person name="Prochnik S.E."/>
            <person name="Smith C.D."/>
            <person name="Tupy J.L."/>
            <person name="Whitfield E.J."/>
            <person name="Bayraktaroglu L."/>
            <person name="Berman B.P."/>
            <person name="Bettencourt B.R."/>
            <person name="Celniker S.E."/>
            <person name="de Grey A.D.N.J."/>
            <person name="Drysdale R.A."/>
            <person name="Harris N.L."/>
            <person name="Richter J."/>
            <person name="Russo S."/>
            <person name="Schroeder A.J."/>
            <person name="Shu S.Q."/>
            <person name="Stapleton M."/>
            <person name="Yamada C."/>
            <person name="Ashburner M."/>
            <person name="Gelbart W.M."/>
            <person name="Rubin G.M."/>
            <person name="Lewis S.E."/>
        </authorList>
    </citation>
    <scope>GENOME REANNOTATION</scope>
    <scope>ALTERNATIVE SPLICING</scope>
    <source>
        <strain>Berkeley</strain>
    </source>
</reference>
<reference key="7">
    <citation type="journal article" date="2002" name="Genome Biol.">
        <title>A Drosophila full-length cDNA resource.</title>
        <authorList>
            <person name="Stapleton M."/>
            <person name="Carlson J.W."/>
            <person name="Brokstein P."/>
            <person name="Yu C."/>
            <person name="Champe M."/>
            <person name="George R.A."/>
            <person name="Guarin H."/>
            <person name="Kronmiller B."/>
            <person name="Pacleb J.M."/>
            <person name="Park S."/>
            <person name="Wan K.H."/>
            <person name="Rubin G.M."/>
            <person name="Celniker S.E."/>
        </authorList>
    </citation>
    <scope>NUCLEOTIDE SEQUENCE [LARGE SCALE MRNA] (ISOFORM A)</scope>
    <source>
        <strain>Berkeley</strain>
        <tissue>Head</tissue>
        <tissue>Ovary</tissue>
    </source>
</reference>
<reference key="8">
    <citation type="submission" date="2008-12" db="EMBL/GenBank/DDBJ databases">
        <authorList>
            <person name="Carlson J."/>
            <person name="Booth B."/>
            <person name="Frise E."/>
            <person name="Park S."/>
            <person name="Wan K."/>
            <person name="Yu C."/>
            <person name="Celniker S."/>
        </authorList>
    </citation>
    <scope>NUCLEOTIDE SEQUENCE [LARGE SCALE MRNA] (ISOFORM A)</scope>
    <source>
        <strain>Berkeley</strain>
    </source>
</reference>
<reference key="9">
    <citation type="journal article" date="1999" name="Development">
        <title>loco encodes an RGS protein required for Drosophila glial differentiation.</title>
        <authorList>
            <person name="Granderath S."/>
            <person name="Stollewerk A."/>
            <person name="Greig S."/>
            <person name="Goodman C.S."/>
            <person name="O'Kane C.J."/>
            <person name="Klambt C."/>
        </authorList>
    </citation>
    <scope>FUNCTION</scope>
    <scope>DEVELOPMENTAL STAGE</scope>
</reference>